<protein>
    <recommendedName>
        <fullName evidence="1">tRNA-modifying protein YgfZ</fullName>
    </recommendedName>
</protein>
<reference key="1">
    <citation type="submission" date="2009-07" db="EMBL/GenBank/DDBJ databases">
        <title>Complete sequence of Pectobacterium carotovorum subsp. carotovorum PC1.</title>
        <authorList>
            <consortium name="US DOE Joint Genome Institute"/>
            <person name="Lucas S."/>
            <person name="Copeland A."/>
            <person name="Lapidus A."/>
            <person name="Glavina del Rio T."/>
            <person name="Tice H."/>
            <person name="Bruce D."/>
            <person name="Goodwin L."/>
            <person name="Pitluck S."/>
            <person name="Munk A.C."/>
            <person name="Brettin T."/>
            <person name="Detter J.C."/>
            <person name="Han C."/>
            <person name="Tapia R."/>
            <person name="Larimer F."/>
            <person name="Land M."/>
            <person name="Hauser L."/>
            <person name="Kyrpides N."/>
            <person name="Mikhailova N."/>
            <person name="Balakrishnan V."/>
            <person name="Glasner J."/>
            <person name="Perna N.T."/>
        </authorList>
    </citation>
    <scope>NUCLEOTIDE SEQUENCE [LARGE SCALE GENOMIC DNA]</scope>
    <source>
        <strain>PC1</strain>
    </source>
</reference>
<sequence length="333" mass="36348">MVNQHTAHQLPFASQPPLASAQLAPTLISLDDWALATMVGPDTVKYLQGQVTADVSALADDRHILCAHCDAKGKMWSNLRLFHHGEGFAFIERRNLRDAQLSELKKYAVFSKTTIAPDDNAVLLGAAGAGIRELLASAFSQLPDADHPVVQHEGATLLHFAHPAERFLLVLSPEQSASLLEQLGDKVSLNDSRQWLTLDIEAGQPIIDSANSAQFIPQATNLQALNGISFSKGCYTGQEMVARAKYRGANKRALYWLAGKANQVPQAGDDLELQLGENWRRTGTVLAASQLQNGEVWVQAVLNNDLTAENVLRVREDADSQITVQPLPYEITD</sequence>
<comment type="function">
    <text evidence="1">Folate-binding protein involved in regulating the level of ATP-DnaA and in the modification of some tRNAs. It is probably a key factor in regulatory networks that act via tRNA modification, such as initiation of chromosomal replication.</text>
</comment>
<comment type="subcellular location">
    <subcellularLocation>
        <location evidence="1">Cytoplasm</location>
    </subcellularLocation>
</comment>
<comment type="similarity">
    <text evidence="1">Belongs to the tRNA-modifying YgfZ family.</text>
</comment>
<feature type="chain" id="PRO_1000213747" description="tRNA-modifying protein YgfZ">
    <location>
        <begin position="1"/>
        <end position="333"/>
    </location>
</feature>
<feature type="binding site" evidence="1">
    <location>
        <position position="33"/>
    </location>
    <ligand>
        <name>folate</name>
        <dbReference type="ChEBI" id="CHEBI:62501"/>
    </ligand>
</feature>
<feature type="binding site" evidence="1">
    <location>
        <position position="195"/>
    </location>
    <ligand>
        <name>folate</name>
        <dbReference type="ChEBI" id="CHEBI:62501"/>
    </ligand>
</feature>
<name>YGFZ_PECCP</name>
<organism>
    <name type="scientific">Pectobacterium carotovorum subsp. carotovorum (strain PC1)</name>
    <dbReference type="NCBI Taxonomy" id="561230"/>
    <lineage>
        <taxon>Bacteria</taxon>
        <taxon>Pseudomonadati</taxon>
        <taxon>Pseudomonadota</taxon>
        <taxon>Gammaproteobacteria</taxon>
        <taxon>Enterobacterales</taxon>
        <taxon>Pectobacteriaceae</taxon>
        <taxon>Pectobacterium</taxon>
    </lineage>
</organism>
<proteinExistence type="inferred from homology"/>
<accession>C6D8Y4</accession>
<dbReference type="EMBL" id="CP001657">
    <property type="protein sequence ID" value="ACT11692.1"/>
    <property type="molecule type" value="Genomic_DNA"/>
</dbReference>
<dbReference type="SMR" id="C6D8Y4"/>
<dbReference type="STRING" id="561230.PC1_0637"/>
<dbReference type="KEGG" id="pct:PC1_0637"/>
<dbReference type="eggNOG" id="COG0354">
    <property type="taxonomic scope" value="Bacteria"/>
</dbReference>
<dbReference type="HOGENOM" id="CLU_007884_6_1_6"/>
<dbReference type="OrthoDB" id="9796287at2"/>
<dbReference type="Proteomes" id="UP000002736">
    <property type="component" value="Chromosome"/>
</dbReference>
<dbReference type="GO" id="GO:0005737">
    <property type="term" value="C:cytoplasm"/>
    <property type="evidence" value="ECO:0007669"/>
    <property type="project" value="UniProtKB-SubCell"/>
</dbReference>
<dbReference type="GO" id="GO:0005542">
    <property type="term" value="F:folic acid binding"/>
    <property type="evidence" value="ECO:0007669"/>
    <property type="project" value="UniProtKB-UniRule"/>
</dbReference>
<dbReference type="GO" id="GO:0016226">
    <property type="term" value="P:iron-sulfur cluster assembly"/>
    <property type="evidence" value="ECO:0007669"/>
    <property type="project" value="TreeGrafter"/>
</dbReference>
<dbReference type="GO" id="GO:0009451">
    <property type="term" value="P:RNA modification"/>
    <property type="evidence" value="ECO:0007669"/>
    <property type="project" value="InterPro"/>
</dbReference>
<dbReference type="GO" id="GO:0008033">
    <property type="term" value="P:tRNA processing"/>
    <property type="evidence" value="ECO:0007669"/>
    <property type="project" value="UniProtKB-UniRule"/>
</dbReference>
<dbReference type="FunFam" id="2.40.30.160:FF:000001">
    <property type="entry name" value="tRNA-modifying protein YgfZ"/>
    <property type="match status" value="1"/>
</dbReference>
<dbReference type="FunFam" id="3.30.70.1400:FF:000002">
    <property type="entry name" value="tRNA-modifying protein YgfZ"/>
    <property type="match status" value="1"/>
</dbReference>
<dbReference type="Gene3D" id="2.40.30.160">
    <property type="match status" value="1"/>
</dbReference>
<dbReference type="Gene3D" id="3.30.70.1630">
    <property type="match status" value="1"/>
</dbReference>
<dbReference type="Gene3D" id="3.30.70.1400">
    <property type="entry name" value="Aminomethyltransferase beta-barrel domains"/>
    <property type="match status" value="1"/>
</dbReference>
<dbReference type="HAMAP" id="MF_01175">
    <property type="entry name" value="tRNA_modifying_YgfZ"/>
    <property type="match status" value="1"/>
</dbReference>
<dbReference type="InterPro" id="IPR029043">
    <property type="entry name" value="GcvT/YgfZ_C"/>
</dbReference>
<dbReference type="InterPro" id="IPR023758">
    <property type="entry name" value="tRNA-modifying_YgfZ"/>
</dbReference>
<dbReference type="InterPro" id="IPR045179">
    <property type="entry name" value="YgfZ/GcvT"/>
</dbReference>
<dbReference type="InterPro" id="IPR017703">
    <property type="entry name" value="YgfZ/GcvT_CS"/>
</dbReference>
<dbReference type="InterPro" id="IPR048451">
    <property type="entry name" value="YgfZ_barrel"/>
</dbReference>
<dbReference type="NCBIfam" id="NF007110">
    <property type="entry name" value="PRK09559.1"/>
    <property type="match status" value="1"/>
</dbReference>
<dbReference type="NCBIfam" id="TIGR03317">
    <property type="entry name" value="ygfZ_signature"/>
    <property type="match status" value="1"/>
</dbReference>
<dbReference type="PANTHER" id="PTHR22602">
    <property type="entry name" value="TRANSFERASE CAF17, MITOCHONDRIAL-RELATED"/>
    <property type="match status" value="1"/>
</dbReference>
<dbReference type="PANTHER" id="PTHR22602:SF0">
    <property type="entry name" value="TRANSFERASE CAF17, MITOCHONDRIAL-RELATED"/>
    <property type="match status" value="1"/>
</dbReference>
<dbReference type="Pfam" id="PF21130">
    <property type="entry name" value="YgfZ_barrel"/>
    <property type="match status" value="1"/>
</dbReference>
<dbReference type="SUPFAM" id="SSF101790">
    <property type="entry name" value="Aminomethyltransferase beta-barrel domain"/>
    <property type="match status" value="1"/>
</dbReference>
<dbReference type="SUPFAM" id="SSF103025">
    <property type="entry name" value="Folate-binding domain"/>
    <property type="match status" value="1"/>
</dbReference>
<evidence type="ECO:0000255" key="1">
    <source>
        <dbReference type="HAMAP-Rule" id="MF_01175"/>
    </source>
</evidence>
<keyword id="KW-0963">Cytoplasm</keyword>
<keyword id="KW-0290">Folate-binding</keyword>
<keyword id="KW-0819">tRNA processing</keyword>
<gene>
    <name type="ordered locus">PC1_0637</name>
</gene>